<gene>
    <name evidence="1" type="primary">mraZ</name>
    <name type="ordered locus">Sbal195_0404</name>
</gene>
<protein>
    <recommendedName>
        <fullName>Transcriptional regulator MraZ</fullName>
    </recommendedName>
</protein>
<keyword id="KW-0963">Cytoplasm</keyword>
<keyword id="KW-0238">DNA-binding</keyword>
<keyword id="KW-0677">Repeat</keyword>
<keyword id="KW-0804">Transcription</keyword>
<keyword id="KW-0805">Transcription regulation</keyword>
<feature type="chain" id="PRO_1000084020" description="Transcriptional regulator MraZ">
    <location>
        <begin position="1"/>
        <end position="152"/>
    </location>
</feature>
<feature type="domain" description="SpoVT-AbrB 1" evidence="2">
    <location>
        <begin position="5"/>
        <end position="52"/>
    </location>
</feature>
<feature type="domain" description="SpoVT-AbrB 2" evidence="2">
    <location>
        <begin position="81"/>
        <end position="124"/>
    </location>
</feature>
<evidence type="ECO:0000255" key="1">
    <source>
        <dbReference type="HAMAP-Rule" id="MF_01008"/>
    </source>
</evidence>
<evidence type="ECO:0000255" key="2">
    <source>
        <dbReference type="PROSITE-ProRule" id="PRU01076"/>
    </source>
</evidence>
<comment type="subunit">
    <text evidence="1">Forms oligomers.</text>
</comment>
<comment type="subcellular location">
    <subcellularLocation>
        <location evidence="1">Cytoplasm</location>
        <location evidence="1">Nucleoid</location>
    </subcellularLocation>
</comment>
<comment type="similarity">
    <text evidence="1">Belongs to the MraZ family.</text>
</comment>
<reference key="1">
    <citation type="submission" date="2007-11" db="EMBL/GenBank/DDBJ databases">
        <title>Complete sequence of chromosome of Shewanella baltica OS195.</title>
        <authorList>
            <consortium name="US DOE Joint Genome Institute"/>
            <person name="Copeland A."/>
            <person name="Lucas S."/>
            <person name="Lapidus A."/>
            <person name="Barry K."/>
            <person name="Glavina del Rio T."/>
            <person name="Dalin E."/>
            <person name="Tice H."/>
            <person name="Pitluck S."/>
            <person name="Chain P."/>
            <person name="Malfatti S."/>
            <person name="Shin M."/>
            <person name="Vergez L."/>
            <person name="Schmutz J."/>
            <person name="Larimer F."/>
            <person name="Land M."/>
            <person name="Hauser L."/>
            <person name="Kyrpides N."/>
            <person name="Kim E."/>
            <person name="Brettar I."/>
            <person name="Rodrigues J."/>
            <person name="Konstantinidis K."/>
            <person name="Klappenbach J."/>
            <person name="Hofle M."/>
            <person name="Tiedje J."/>
            <person name="Richardson P."/>
        </authorList>
    </citation>
    <scope>NUCLEOTIDE SEQUENCE [LARGE SCALE GENOMIC DNA]</scope>
    <source>
        <strain>OS195</strain>
    </source>
</reference>
<proteinExistence type="inferred from homology"/>
<organism>
    <name type="scientific">Shewanella baltica (strain OS195)</name>
    <dbReference type="NCBI Taxonomy" id="399599"/>
    <lineage>
        <taxon>Bacteria</taxon>
        <taxon>Pseudomonadati</taxon>
        <taxon>Pseudomonadota</taxon>
        <taxon>Gammaproteobacteria</taxon>
        <taxon>Alteromonadales</taxon>
        <taxon>Shewanellaceae</taxon>
        <taxon>Shewanella</taxon>
    </lineage>
</organism>
<sequence length="152" mass="17671">MFRGASAINLDTKGRIAIPVRYREPLQLEHQGRIVITVDIQSACLLLYPIHEWELIEAKLLKFSDTDKTQRSLKRLLLGYAHEVELDGNGRILLPPPLRQYANLDKRIMLVGQLNKFELWDEQSWLQQIDECQETIRSEELASNERLADFSL</sequence>
<accession>A9KY20</accession>
<name>MRAZ_SHEB9</name>
<dbReference type="EMBL" id="CP000891">
    <property type="protein sequence ID" value="ABX47585.1"/>
    <property type="molecule type" value="Genomic_DNA"/>
</dbReference>
<dbReference type="RefSeq" id="WP_006086695.1">
    <property type="nucleotide sequence ID" value="NC_009997.1"/>
</dbReference>
<dbReference type="SMR" id="A9KY20"/>
<dbReference type="GeneID" id="11770742"/>
<dbReference type="KEGG" id="sbn:Sbal195_0404"/>
<dbReference type="HOGENOM" id="CLU_107907_2_0_6"/>
<dbReference type="Proteomes" id="UP000000770">
    <property type="component" value="Chromosome"/>
</dbReference>
<dbReference type="GO" id="GO:0005737">
    <property type="term" value="C:cytoplasm"/>
    <property type="evidence" value="ECO:0007669"/>
    <property type="project" value="UniProtKB-UniRule"/>
</dbReference>
<dbReference type="GO" id="GO:0009295">
    <property type="term" value="C:nucleoid"/>
    <property type="evidence" value="ECO:0007669"/>
    <property type="project" value="UniProtKB-SubCell"/>
</dbReference>
<dbReference type="GO" id="GO:0003700">
    <property type="term" value="F:DNA-binding transcription factor activity"/>
    <property type="evidence" value="ECO:0007669"/>
    <property type="project" value="UniProtKB-UniRule"/>
</dbReference>
<dbReference type="GO" id="GO:0000976">
    <property type="term" value="F:transcription cis-regulatory region binding"/>
    <property type="evidence" value="ECO:0007669"/>
    <property type="project" value="TreeGrafter"/>
</dbReference>
<dbReference type="GO" id="GO:2000143">
    <property type="term" value="P:negative regulation of DNA-templated transcription initiation"/>
    <property type="evidence" value="ECO:0007669"/>
    <property type="project" value="TreeGrafter"/>
</dbReference>
<dbReference type="CDD" id="cd16321">
    <property type="entry name" value="MraZ_C"/>
    <property type="match status" value="1"/>
</dbReference>
<dbReference type="CDD" id="cd16320">
    <property type="entry name" value="MraZ_N"/>
    <property type="match status" value="1"/>
</dbReference>
<dbReference type="FunFam" id="3.40.1550.20:FF:000001">
    <property type="entry name" value="Transcriptional regulator MraZ"/>
    <property type="match status" value="1"/>
</dbReference>
<dbReference type="Gene3D" id="3.40.1550.20">
    <property type="entry name" value="Transcriptional regulator MraZ domain"/>
    <property type="match status" value="1"/>
</dbReference>
<dbReference type="HAMAP" id="MF_01008">
    <property type="entry name" value="MraZ"/>
    <property type="match status" value="1"/>
</dbReference>
<dbReference type="InterPro" id="IPR003444">
    <property type="entry name" value="MraZ"/>
</dbReference>
<dbReference type="InterPro" id="IPR035644">
    <property type="entry name" value="MraZ_C"/>
</dbReference>
<dbReference type="InterPro" id="IPR020603">
    <property type="entry name" value="MraZ_dom"/>
</dbReference>
<dbReference type="InterPro" id="IPR035642">
    <property type="entry name" value="MraZ_N"/>
</dbReference>
<dbReference type="InterPro" id="IPR038619">
    <property type="entry name" value="MraZ_sf"/>
</dbReference>
<dbReference type="InterPro" id="IPR007159">
    <property type="entry name" value="SpoVT-AbrB_dom"/>
</dbReference>
<dbReference type="InterPro" id="IPR037914">
    <property type="entry name" value="SpoVT-AbrB_sf"/>
</dbReference>
<dbReference type="NCBIfam" id="TIGR00242">
    <property type="entry name" value="division/cell wall cluster transcriptional repressor MraZ"/>
    <property type="match status" value="1"/>
</dbReference>
<dbReference type="PANTHER" id="PTHR34701">
    <property type="entry name" value="TRANSCRIPTIONAL REGULATOR MRAZ"/>
    <property type="match status" value="1"/>
</dbReference>
<dbReference type="PANTHER" id="PTHR34701:SF1">
    <property type="entry name" value="TRANSCRIPTIONAL REGULATOR MRAZ"/>
    <property type="match status" value="1"/>
</dbReference>
<dbReference type="Pfam" id="PF02381">
    <property type="entry name" value="MraZ"/>
    <property type="match status" value="2"/>
</dbReference>
<dbReference type="SUPFAM" id="SSF89447">
    <property type="entry name" value="AbrB/MazE/MraZ-like"/>
    <property type="match status" value="1"/>
</dbReference>
<dbReference type="PROSITE" id="PS51740">
    <property type="entry name" value="SPOVT_ABRB"/>
    <property type="match status" value="2"/>
</dbReference>